<evidence type="ECO:0000250" key="1"/>
<evidence type="ECO:0000256" key="2">
    <source>
        <dbReference type="SAM" id="MobiDB-lite"/>
    </source>
</evidence>
<evidence type="ECO:0000269" key="3">
    <source>
    </source>
</evidence>
<evidence type="ECO:0000305" key="4"/>
<reference key="1">
    <citation type="submission" date="1999-04" db="EMBL/GenBank/DDBJ databases">
        <title>Structural analysis of Arabidopsis thaliana chromosome 5. XI.</title>
        <authorList>
            <person name="Kaneko T."/>
            <person name="Katoh T."/>
            <person name="Asamizu E."/>
            <person name="Sato S."/>
            <person name="Nakamura Y."/>
            <person name="Kotani H."/>
            <person name="Tabata S."/>
        </authorList>
    </citation>
    <scope>NUCLEOTIDE SEQUENCE [LARGE SCALE GENOMIC DNA]</scope>
    <source>
        <strain>cv. Columbia</strain>
    </source>
</reference>
<reference key="2">
    <citation type="journal article" date="2017" name="Plant J.">
        <title>Araport11: a complete reannotation of the Arabidopsis thaliana reference genome.</title>
        <authorList>
            <person name="Cheng C.Y."/>
            <person name="Krishnakumar V."/>
            <person name="Chan A.P."/>
            <person name="Thibaud-Nissen F."/>
            <person name="Schobel S."/>
            <person name="Town C.D."/>
        </authorList>
    </citation>
    <scope>GENOME REANNOTATION</scope>
    <source>
        <strain>cv. Columbia</strain>
    </source>
</reference>
<reference key="3">
    <citation type="journal article" date="2003" name="Science">
        <title>Empirical analysis of transcriptional activity in the Arabidopsis genome.</title>
        <authorList>
            <person name="Yamada K."/>
            <person name="Lim J."/>
            <person name="Dale J.M."/>
            <person name="Chen H."/>
            <person name="Shinn P."/>
            <person name="Palm C.J."/>
            <person name="Southwick A.M."/>
            <person name="Wu H.C."/>
            <person name="Kim C.J."/>
            <person name="Nguyen M."/>
            <person name="Pham P.K."/>
            <person name="Cheuk R.F."/>
            <person name="Karlin-Newmann G."/>
            <person name="Liu S.X."/>
            <person name="Lam B."/>
            <person name="Sakano H."/>
            <person name="Wu T."/>
            <person name="Yu G."/>
            <person name="Miranda M."/>
            <person name="Quach H.L."/>
            <person name="Tripp M."/>
            <person name="Chang C.H."/>
            <person name="Lee J.M."/>
            <person name="Toriumi M.J."/>
            <person name="Chan M.M."/>
            <person name="Tang C.C."/>
            <person name="Onodera C.S."/>
            <person name="Deng J.M."/>
            <person name="Akiyama K."/>
            <person name="Ansari Y."/>
            <person name="Arakawa T."/>
            <person name="Banh J."/>
            <person name="Banno F."/>
            <person name="Bowser L."/>
            <person name="Brooks S.Y."/>
            <person name="Carninci P."/>
            <person name="Chao Q."/>
            <person name="Choy N."/>
            <person name="Enju A."/>
            <person name="Goldsmith A.D."/>
            <person name="Gurjal M."/>
            <person name="Hansen N.F."/>
            <person name="Hayashizaki Y."/>
            <person name="Johnson-Hopson C."/>
            <person name="Hsuan V.W."/>
            <person name="Iida K."/>
            <person name="Karnes M."/>
            <person name="Khan S."/>
            <person name="Koesema E."/>
            <person name="Ishida J."/>
            <person name="Jiang P.X."/>
            <person name="Jones T."/>
            <person name="Kawai J."/>
            <person name="Kamiya A."/>
            <person name="Meyers C."/>
            <person name="Nakajima M."/>
            <person name="Narusaka M."/>
            <person name="Seki M."/>
            <person name="Sakurai T."/>
            <person name="Satou M."/>
            <person name="Tamse R."/>
            <person name="Vaysberg M."/>
            <person name="Wallender E.K."/>
            <person name="Wong C."/>
            <person name="Yamamura Y."/>
            <person name="Yuan S."/>
            <person name="Shinozaki K."/>
            <person name="Davis R.W."/>
            <person name="Theologis A."/>
            <person name="Ecker J.R."/>
        </authorList>
    </citation>
    <scope>NUCLEOTIDE SEQUENCE [LARGE SCALE MRNA]</scope>
    <source>
        <strain>cv. Columbia</strain>
    </source>
</reference>
<reference key="4">
    <citation type="journal article" date="2006" name="Plant Mol. Biol.">
        <title>Identification and characterization of PiORP1, a Petunia oxysterol-binding-protein related protein involved in receptor-kinase mediated signaling in pollen, and analysis of the ORP gene family in Arabidopsis.</title>
        <authorList>
            <person name="Skirpan A.L."/>
            <person name="Dowd P.E."/>
            <person name="Sijacic P."/>
            <person name="Jaworski C.J."/>
            <person name="Gilroy S."/>
            <person name="Kao T.H."/>
        </authorList>
    </citation>
    <scope>TISSUE SPECIFICITY</scope>
    <scope>GENE FAMILY</scope>
    <scope>NOMENCLATURE</scope>
</reference>
<comment type="function">
    <text evidence="1">May be involved in the transport of sterols.</text>
</comment>
<comment type="tissue specificity">
    <text evidence="3">Expressed in roots, leaves, stems and flowers.</text>
</comment>
<comment type="similarity">
    <text evidence="4">Belongs to the OSBP family.</text>
</comment>
<comment type="sequence caution" evidence="4">
    <conflict type="erroneous gene model prediction">
        <sequence resource="EMBL-CDS" id="BAA97478"/>
    </conflict>
</comment>
<dbReference type="EMBL" id="AB025604">
    <property type="protein sequence ID" value="BAA97478.1"/>
    <property type="status" value="ALT_SEQ"/>
    <property type="molecule type" value="Genomic_DNA"/>
</dbReference>
<dbReference type="EMBL" id="CP002688">
    <property type="protein sequence ID" value="AED97183.1"/>
    <property type="molecule type" value="Genomic_DNA"/>
</dbReference>
<dbReference type="EMBL" id="AY054473">
    <property type="protein sequence ID" value="AAK96664.1"/>
    <property type="molecule type" value="mRNA"/>
</dbReference>
<dbReference type="EMBL" id="BT000115">
    <property type="protein sequence ID" value="AAN15434.1"/>
    <property type="molecule type" value="mRNA"/>
</dbReference>
<dbReference type="RefSeq" id="NP_200750.1">
    <property type="nucleotide sequence ID" value="NM_125333.5"/>
</dbReference>
<dbReference type="SMR" id="Q93Y40"/>
<dbReference type="FunCoup" id="Q93Y40">
    <property type="interactions" value="1112"/>
</dbReference>
<dbReference type="STRING" id="3702.Q93Y40"/>
<dbReference type="GlyGen" id="Q93Y40">
    <property type="glycosylation" value="1 site"/>
</dbReference>
<dbReference type="PaxDb" id="3702-AT5G59420.1"/>
<dbReference type="ProteomicsDB" id="248647"/>
<dbReference type="DNASU" id="836061"/>
<dbReference type="EnsemblPlants" id="AT5G59420.1">
    <property type="protein sequence ID" value="AT5G59420.1"/>
    <property type="gene ID" value="AT5G59420"/>
</dbReference>
<dbReference type="GeneID" id="836061"/>
<dbReference type="Gramene" id="AT5G59420.1">
    <property type="protein sequence ID" value="AT5G59420.1"/>
    <property type="gene ID" value="AT5G59420"/>
</dbReference>
<dbReference type="KEGG" id="ath:AT5G59420"/>
<dbReference type="Araport" id="AT5G59420"/>
<dbReference type="TAIR" id="AT5G59420">
    <property type="gene designation" value="ORP3C"/>
</dbReference>
<dbReference type="eggNOG" id="KOG1737">
    <property type="taxonomic scope" value="Eukaryota"/>
</dbReference>
<dbReference type="HOGENOM" id="CLU_007105_6_0_1"/>
<dbReference type="InParanoid" id="Q93Y40"/>
<dbReference type="OMA" id="VISNWRT"/>
<dbReference type="PhylomeDB" id="Q93Y40"/>
<dbReference type="CD-CODE" id="4299E36E">
    <property type="entry name" value="Nucleolus"/>
</dbReference>
<dbReference type="PRO" id="PR:Q93Y40"/>
<dbReference type="Proteomes" id="UP000006548">
    <property type="component" value="Chromosome 5"/>
</dbReference>
<dbReference type="ExpressionAtlas" id="Q93Y40">
    <property type="expression patterns" value="baseline and differential"/>
</dbReference>
<dbReference type="GO" id="GO:0005829">
    <property type="term" value="C:cytosol"/>
    <property type="evidence" value="ECO:0007005"/>
    <property type="project" value="TAIR"/>
</dbReference>
<dbReference type="GO" id="GO:0009536">
    <property type="term" value="C:plastid"/>
    <property type="evidence" value="ECO:0007005"/>
    <property type="project" value="TAIR"/>
</dbReference>
<dbReference type="GO" id="GO:0008289">
    <property type="term" value="F:lipid binding"/>
    <property type="evidence" value="ECO:0007669"/>
    <property type="project" value="UniProtKB-KW"/>
</dbReference>
<dbReference type="GO" id="GO:0006869">
    <property type="term" value="P:lipid transport"/>
    <property type="evidence" value="ECO:0007669"/>
    <property type="project" value="UniProtKB-KW"/>
</dbReference>
<dbReference type="FunFam" id="3.30.70.3490:FF:000008">
    <property type="entry name" value="Oxysterol-binding protein-related protein 3C"/>
    <property type="match status" value="1"/>
</dbReference>
<dbReference type="FunFam" id="2.40.160.120:FF:000009">
    <property type="entry name" value="oxysterol-binding protein-related protein 3C"/>
    <property type="match status" value="1"/>
</dbReference>
<dbReference type="Gene3D" id="2.40.160.120">
    <property type="match status" value="1"/>
</dbReference>
<dbReference type="Gene3D" id="3.30.70.3490">
    <property type="match status" value="1"/>
</dbReference>
<dbReference type="InterPro" id="IPR037239">
    <property type="entry name" value="OSBP_sf"/>
</dbReference>
<dbReference type="InterPro" id="IPR000648">
    <property type="entry name" value="Oxysterol-bd"/>
</dbReference>
<dbReference type="InterPro" id="IPR018494">
    <property type="entry name" value="Oxysterol-bd_CS"/>
</dbReference>
<dbReference type="PANTHER" id="PTHR10972:SF136">
    <property type="entry name" value="OXYSTEROL-BINDING PROTEIN 8"/>
    <property type="match status" value="1"/>
</dbReference>
<dbReference type="PANTHER" id="PTHR10972">
    <property type="entry name" value="OXYSTEROL-BINDING PROTEIN-RELATED"/>
    <property type="match status" value="1"/>
</dbReference>
<dbReference type="Pfam" id="PF01237">
    <property type="entry name" value="Oxysterol_BP"/>
    <property type="match status" value="1"/>
</dbReference>
<dbReference type="SUPFAM" id="SSF144000">
    <property type="entry name" value="Oxysterol-binding protein-like"/>
    <property type="match status" value="1"/>
</dbReference>
<dbReference type="PROSITE" id="PS01013">
    <property type="entry name" value="OSBP"/>
    <property type="match status" value="1"/>
</dbReference>
<name>ORP3C_ARATH</name>
<accession>Q93Y40</accession>
<accession>Q9LTI7</accession>
<organism>
    <name type="scientific">Arabidopsis thaliana</name>
    <name type="common">Mouse-ear cress</name>
    <dbReference type="NCBI Taxonomy" id="3702"/>
    <lineage>
        <taxon>Eukaryota</taxon>
        <taxon>Viridiplantae</taxon>
        <taxon>Streptophyta</taxon>
        <taxon>Embryophyta</taxon>
        <taxon>Tracheophyta</taxon>
        <taxon>Spermatophyta</taxon>
        <taxon>Magnoliopsida</taxon>
        <taxon>eudicotyledons</taxon>
        <taxon>Gunneridae</taxon>
        <taxon>Pentapetalae</taxon>
        <taxon>rosids</taxon>
        <taxon>malvids</taxon>
        <taxon>Brassicales</taxon>
        <taxon>Brassicaceae</taxon>
        <taxon>Camelineae</taxon>
        <taxon>Arabidopsis</taxon>
    </lineage>
</organism>
<protein>
    <recommendedName>
        <fullName>Oxysterol-binding protein-related protein 3C</fullName>
    </recommendedName>
    <alternativeName>
        <fullName>OSBP-related protein 3C</fullName>
    </alternativeName>
</protein>
<gene>
    <name type="primary">ORP3C</name>
    <name type="ordered locus">At5g59420</name>
    <name type="ORF">F2O15.10</name>
</gene>
<proteinExistence type="evidence at transcript level"/>
<keyword id="KW-0445">Lipid transport</keyword>
<keyword id="KW-0446">Lipid-binding</keyword>
<keyword id="KW-1185">Reference proteome</keyword>
<keyword id="KW-0813">Transport</keyword>
<feature type="chain" id="PRO_0000402164" description="Oxysterol-binding protein-related protein 3C">
    <location>
        <begin position="1"/>
        <end position="457"/>
    </location>
</feature>
<feature type="region of interest" description="Disordered" evidence="2">
    <location>
        <begin position="37"/>
        <end position="61"/>
    </location>
</feature>
<feature type="region of interest" description="Disordered" evidence="2">
    <location>
        <begin position="363"/>
        <end position="393"/>
    </location>
</feature>
<feature type="compositionally biased region" description="Basic and acidic residues" evidence="2">
    <location>
        <begin position="47"/>
        <end position="61"/>
    </location>
</feature>
<feature type="compositionally biased region" description="Basic and acidic residues" evidence="2">
    <location>
        <begin position="370"/>
        <end position="391"/>
    </location>
</feature>
<sequence length="457" mass="51966">MGSPKKNENKGFFAAMTSGFSMFGTAVSRSVNGVQGNEGVEVINPEGGKEDAEEEAQKGRWKDEERDSYWKMMQKYIGSDITSMVTLPVVIFEPMTMLQKMAEIMEYSHLLDQADECEDPYLRLVYASSWAISVYYAFQRTWKPFNPILGETYEMVNHGGISFISEQVSHHPPMSAGHAENEHFIYDITSKLKTKLLGNSVDVYPVGRTRVTLKKDGVVLDLVPPLTKIHNLIFGRTWVDSPGEMVMTNLTTGDKVVLYFQPCGWFGSGRYEVDGYVYSAAEEPKIMMTGKWNEKMSYQPCDAEGEPLPGTELKEVWHLADVPKNDNFQYTHFAHKINSFDTAPAKLLASDSRIRPDRYSLEQGDLSKAGSEKHSLEERQRAEKRTRETKGQKFTPRWFDLTDEITPTPWGDIEVYQYNGKYNEHRDTAESSSSASNETDLKSIEFNPWQYGNISTE</sequence>